<proteinExistence type="inferred from homology"/>
<feature type="chain" id="PRO_1000050787" description="Large ribosomal subunit protein bL35">
    <location>
        <begin position="1"/>
        <end position="67"/>
    </location>
</feature>
<feature type="region of interest" description="Disordered" evidence="2">
    <location>
        <begin position="1"/>
        <end position="24"/>
    </location>
</feature>
<feature type="compositionally biased region" description="Basic residues" evidence="2">
    <location>
        <begin position="1"/>
        <end position="16"/>
    </location>
</feature>
<name>RL35_VEREI</name>
<reference key="1">
    <citation type="submission" date="2006-12" db="EMBL/GenBank/DDBJ databases">
        <title>Complete sequence of chromosome 1 of Verminephrobacter eiseniae EF01-2.</title>
        <authorList>
            <person name="Copeland A."/>
            <person name="Lucas S."/>
            <person name="Lapidus A."/>
            <person name="Barry K."/>
            <person name="Detter J.C."/>
            <person name="Glavina del Rio T."/>
            <person name="Dalin E."/>
            <person name="Tice H."/>
            <person name="Pitluck S."/>
            <person name="Chertkov O."/>
            <person name="Brettin T."/>
            <person name="Bruce D."/>
            <person name="Han C."/>
            <person name="Tapia R."/>
            <person name="Gilna P."/>
            <person name="Schmutz J."/>
            <person name="Larimer F."/>
            <person name="Land M."/>
            <person name="Hauser L."/>
            <person name="Kyrpides N."/>
            <person name="Kim E."/>
            <person name="Stahl D."/>
            <person name="Richardson P."/>
        </authorList>
    </citation>
    <scope>NUCLEOTIDE SEQUENCE [LARGE SCALE GENOMIC DNA]</scope>
    <source>
        <strain>EF01-2</strain>
    </source>
</reference>
<accession>A1WMG7</accession>
<keyword id="KW-1185">Reference proteome</keyword>
<keyword id="KW-0687">Ribonucleoprotein</keyword>
<keyword id="KW-0689">Ribosomal protein</keyword>
<evidence type="ECO:0000255" key="1">
    <source>
        <dbReference type="HAMAP-Rule" id="MF_00514"/>
    </source>
</evidence>
<evidence type="ECO:0000256" key="2">
    <source>
        <dbReference type="SAM" id="MobiDB-lite"/>
    </source>
</evidence>
<evidence type="ECO:0000305" key="3"/>
<organism>
    <name type="scientific">Verminephrobacter eiseniae (strain EF01-2)</name>
    <dbReference type="NCBI Taxonomy" id="391735"/>
    <lineage>
        <taxon>Bacteria</taxon>
        <taxon>Pseudomonadati</taxon>
        <taxon>Pseudomonadota</taxon>
        <taxon>Betaproteobacteria</taxon>
        <taxon>Burkholderiales</taxon>
        <taxon>Comamonadaceae</taxon>
        <taxon>Verminephrobacter</taxon>
    </lineage>
</organism>
<gene>
    <name evidence="1" type="primary">rpmI</name>
    <name type="ordered locus">Veis_3091</name>
</gene>
<comment type="similarity">
    <text evidence="1">Belongs to the bacterial ribosomal protein bL35 family.</text>
</comment>
<sequence>MPKMKTKSSAKKRFRVRPGGTVKRGQAFKRHILTKMTTRNKRHLRGTVAVHETNMGSMAQMLPGAGL</sequence>
<protein>
    <recommendedName>
        <fullName evidence="1">Large ribosomal subunit protein bL35</fullName>
    </recommendedName>
    <alternativeName>
        <fullName evidence="3">50S ribosomal protein L35</fullName>
    </alternativeName>
</protein>
<dbReference type="EMBL" id="CP000542">
    <property type="protein sequence ID" value="ABM58824.1"/>
    <property type="molecule type" value="Genomic_DNA"/>
</dbReference>
<dbReference type="RefSeq" id="WP_011810819.1">
    <property type="nucleotide sequence ID" value="NC_008786.1"/>
</dbReference>
<dbReference type="SMR" id="A1WMG7"/>
<dbReference type="STRING" id="391735.Veis_3091"/>
<dbReference type="GeneID" id="76461553"/>
<dbReference type="KEGG" id="vei:Veis_3091"/>
<dbReference type="eggNOG" id="COG0291">
    <property type="taxonomic scope" value="Bacteria"/>
</dbReference>
<dbReference type="HOGENOM" id="CLU_169643_4_3_4"/>
<dbReference type="OrthoDB" id="47476at2"/>
<dbReference type="Proteomes" id="UP000000374">
    <property type="component" value="Chromosome"/>
</dbReference>
<dbReference type="GO" id="GO:0022625">
    <property type="term" value="C:cytosolic large ribosomal subunit"/>
    <property type="evidence" value="ECO:0007669"/>
    <property type="project" value="TreeGrafter"/>
</dbReference>
<dbReference type="GO" id="GO:0003735">
    <property type="term" value="F:structural constituent of ribosome"/>
    <property type="evidence" value="ECO:0007669"/>
    <property type="project" value="InterPro"/>
</dbReference>
<dbReference type="GO" id="GO:0006412">
    <property type="term" value="P:translation"/>
    <property type="evidence" value="ECO:0007669"/>
    <property type="project" value="UniProtKB-UniRule"/>
</dbReference>
<dbReference type="FunFam" id="4.10.410.60:FF:000001">
    <property type="entry name" value="50S ribosomal protein L35"/>
    <property type="match status" value="1"/>
</dbReference>
<dbReference type="Gene3D" id="4.10.410.60">
    <property type="match status" value="1"/>
</dbReference>
<dbReference type="HAMAP" id="MF_00514">
    <property type="entry name" value="Ribosomal_bL35"/>
    <property type="match status" value="1"/>
</dbReference>
<dbReference type="InterPro" id="IPR001706">
    <property type="entry name" value="Ribosomal_bL35"/>
</dbReference>
<dbReference type="InterPro" id="IPR021137">
    <property type="entry name" value="Ribosomal_bL35-like"/>
</dbReference>
<dbReference type="InterPro" id="IPR018265">
    <property type="entry name" value="Ribosomal_bL35_CS"/>
</dbReference>
<dbReference type="InterPro" id="IPR037229">
    <property type="entry name" value="Ribosomal_bL35_sf"/>
</dbReference>
<dbReference type="NCBIfam" id="TIGR00001">
    <property type="entry name" value="rpmI_bact"/>
    <property type="match status" value="1"/>
</dbReference>
<dbReference type="PANTHER" id="PTHR33343">
    <property type="entry name" value="54S RIBOSOMAL PROTEIN BL35M"/>
    <property type="match status" value="1"/>
</dbReference>
<dbReference type="PANTHER" id="PTHR33343:SF1">
    <property type="entry name" value="LARGE RIBOSOMAL SUBUNIT PROTEIN BL35M"/>
    <property type="match status" value="1"/>
</dbReference>
<dbReference type="Pfam" id="PF01632">
    <property type="entry name" value="Ribosomal_L35p"/>
    <property type="match status" value="1"/>
</dbReference>
<dbReference type="PRINTS" id="PR00064">
    <property type="entry name" value="RIBOSOMALL35"/>
</dbReference>
<dbReference type="SUPFAM" id="SSF143034">
    <property type="entry name" value="L35p-like"/>
    <property type="match status" value="1"/>
</dbReference>
<dbReference type="PROSITE" id="PS00936">
    <property type="entry name" value="RIBOSOMAL_L35"/>
    <property type="match status" value="1"/>
</dbReference>